<comment type="function">
    <text evidence="1">Catalyzes the oxidation of 5,10-methylenetetrahydrofolate to 5,10-methenyltetrahydrofolate and then the hydrolysis of 5,10-methenyltetrahydrofolate to 10-formyltetrahydrofolate.</text>
</comment>
<comment type="catalytic activity">
    <reaction evidence="1">
        <text>(6R)-5,10-methylene-5,6,7,8-tetrahydrofolate + NADP(+) = (6R)-5,10-methenyltetrahydrofolate + NADPH</text>
        <dbReference type="Rhea" id="RHEA:22812"/>
        <dbReference type="ChEBI" id="CHEBI:15636"/>
        <dbReference type="ChEBI" id="CHEBI:57455"/>
        <dbReference type="ChEBI" id="CHEBI:57783"/>
        <dbReference type="ChEBI" id="CHEBI:58349"/>
        <dbReference type="EC" id="1.5.1.5"/>
    </reaction>
</comment>
<comment type="catalytic activity">
    <reaction evidence="1">
        <text>(6R)-5,10-methenyltetrahydrofolate + H2O = (6R)-10-formyltetrahydrofolate + H(+)</text>
        <dbReference type="Rhea" id="RHEA:23700"/>
        <dbReference type="ChEBI" id="CHEBI:15377"/>
        <dbReference type="ChEBI" id="CHEBI:15378"/>
        <dbReference type="ChEBI" id="CHEBI:57455"/>
        <dbReference type="ChEBI" id="CHEBI:195366"/>
        <dbReference type="EC" id="3.5.4.9"/>
    </reaction>
</comment>
<comment type="pathway">
    <text evidence="1">One-carbon metabolism; tetrahydrofolate interconversion.</text>
</comment>
<comment type="subunit">
    <text evidence="1">Homodimer.</text>
</comment>
<comment type="similarity">
    <text evidence="1">Belongs to the tetrahydrofolate dehydrogenase/cyclohydrolase family.</text>
</comment>
<protein>
    <recommendedName>
        <fullName evidence="1">Bifunctional protein FolD</fullName>
    </recommendedName>
    <domain>
        <recommendedName>
            <fullName evidence="1">Methylenetetrahydrofolate dehydrogenase</fullName>
            <ecNumber evidence="1">1.5.1.5</ecNumber>
        </recommendedName>
    </domain>
    <domain>
        <recommendedName>
            <fullName evidence="1">Methenyltetrahydrofolate cyclohydrolase</fullName>
            <ecNumber evidence="1">3.5.4.9</ecNumber>
        </recommendedName>
    </domain>
</protein>
<dbReference type="EC" id="1.5.1.5" evidence="1"/>
<dbReference type="EC" id="3.5.4.9" evidence="1"/>
<dbReference type="EMBL" id="CP000705">
    <property type="protein sequence ID" value="ABQ83441.1"/>
    <property type="molecule type" value="Genomic_DNA"/>
</dbReference>
<dbReference type="RefSeq" id="WP_003668408.1">
    <property type="nucleotide sequence ID" value="NC_009513.1"/>
</dbReference>
<dbReference type="SMR" id="A5VKR7"/>
<dbReference type="STRING" id="557436.Lreu_1184"/>
<dbReference type="KEGG" id="lre:Lreu_1184"/>
<dbReference type="PATRIC" id="fig|557436.17.peg.50"/>
<dbReference type="eggNOG" id="COG0190">
    <property type="taxonomic scope" value="Bacteria"/>
</dbReference>
<dbReference type="HOGENOM" id="CLU_034045_2_1_9"/>
<dbReference type="UniPathway" id="UPA00193"/>
<dbReference type="Proteomes" id="UP000001991">
    <property type="component" value="Chromosome"/>
</dbReference>
<dbReference type="GO" id="GO:0005829">
    <property type="term" value="C:cytosol"/>
    <property type="evidence" value="ECO:0007669"/>
    <property type="project" value="TreeGrafter"/>
</dbReference>
<dbReference type="GO" id="GO:0004477">
    <property type="term" value="F:methenyltetrahydrofolate cyclohydrolase activity"/>
    <property type="evidence" value="ECO:0007669"/>
    <property type="project" value="UniProtKB-UniRule"/>
</dbReference>
<dbReference type="GO" id="GO:0004488">
    <property type="term" value="F:methylenetetrahydrofolate dehydrogenase (NADP+) activity"/>
    <property type="evidence" value="ECO:0007669"/>
    <property type="project" value="UniProtKB-UniRule"/>
</dbReference>
<dbReference type="GO" id="GO:0000105">
    <property type="term" value="P:L-histidine biosynthetic process"/>
    <property type="evidence" value="ECO:0007669"/>
    <property type="project" value="UniProtKB-KW"/>
</dbReference>
<dbReference type="GO" id="GO:0009086">
    <property type="term" value="P:methionine biosynthetic process"/>
    <property type="evidence" value="ECO:0007669"/>
    <property type="project" value="UniProtKB-KW"/>
</dbReference>
<dbReference type="GO" id="GO:0006164">
    <property type="term" value="P:purine nucleotide biosynthetic process"/>
    <property type="evidence" value="ECO:0007669"/>
    <property type="project" value="UniProtKB-KW"/>
</dbReference>
<dbReference type="GO" id="GO:0035999">
    <property type="term" value="P:tetrahydrofolate interconversion"/>
    <property type="evidence" value="ECO:0007669"/>
    <property type="project" value="UniProtKB-UniRule"/>
</dbReference>
<dbReference type="CDD" id="cd01080">
    <property type="entry name" value="NAD_bind_m-THF_DH_Cyclohyd"/>
    <property type="match status" value="1"/>
</dbReference>
<dbReference type="FunFam" id="3.40.50.720:FF:000094">
    <property type="entry name" value="Bifunctional protein FolD"/>
    <property type="match status" value="1"/>
</dbReference>
<dbReference type="FunFam" id="3.40.50.10860:FF:000005">
    <property type="entry name" value="C-1-tetrahydrofolate synthase, cytoplasmic, putative"/>
    <property type="match status" value="1"/>
</dbReference>
<dbReference type="Gene3D" id="3.40.50.10860">
    <property type="entry name" value="Leucine Dehydrogenase, chain A, domain 1"/>
    <property type="match status" value="1"/>
</dbReference>
<dbReference type="Gene3D" id="3.40.50.720">
    <property type="entry name" value="NAD(P)-binding Rossmann-like Domain"/>
    <property type="match status" value="1"/>
</dbReference>
<dbReference type="HAMAP" id="MF_01576">
    <property type="entry name" value="THF_DHG_CYH"/>
    <property type="match status" value="1"/>
</dbReference>
<dbReference type="InterPro" id="IPR046346">
    <property type="entry name" value="Aminoacid_DH-like_N_sf"/>
</dbReference>
<dbReference type="InterPro" id="IPR036291">
    <property type="entry name" value="NAD(P)-bd_dom_sf"/>
</dbReference>
<dbReference type="InterPro" id="IPR000672">
    <property type="entry name" value="THF_DH/CycHdrlase"/>
</dbReference>
<dbReference type="InterPro" id="IPR020630">
    <property type="entry name" value="THF_DH/CycHdrlase_cat_dom"/>
</dbReference>
<dbReference type="InterPro" id="IPR020867">
    <property type="entry name" value="THF_DH/CycHdrlase_CS"/>
</dbReference>
<dbReference type="InterPro" id="IPR020631">
    <property type="entry name" value="THF_DH/CycHdrlase_NAD-bd_dom"/>
</dbReference>
<dbReference type="PANTHER" id="PTHR48099:SF5">
    <property type="entry name" value="C-1-TETRAHYDROFOLATE SYNTHASE, CYTOPLASMIC"/>
    <property type="match status" value="1"/>
</dbReference>
<dbReference type="PANTHER" id="PTHR48099">
    <property type="entry name" value="C-1-TETRAHYDROFOLATE SYNTHASE, CYTOPLASMIC-RELATED"/>
    <property type="match status" value="1"/>
</dbReference>
<dbReference type="Pfam" id="PF00763">
    <property type="entry name" value="THF_DHG_CYH"/>
    <property type="match status" value="1"/>
</dbReference>
<dbReference type="Pfam" id="PF02882">
    <property type="entry name" value="THF_DHG_CYH_C"/>
    <property type="match status" value="1"/>
</dbReference>
<dbReference type="PRINTS" id="PR00085">
    <property type="entry name" value="THFDHDRGNASE"/>
</dbReference>
<dbReference type="SUPFAM" id="SSF53223">
    <property type="entry name" value="Aminoacid dehydrogenase-like, N-terminal domain"/>
    <property type="match status" value="1"/>
</dbReference>
<dbReference type="SUPFAM" id="SSF51735">
    <property type="entry name" value="NAD(P)-binding Rossmann-fold domains"/>
    <property type="match status" value="1"/>
</dbReference>
<dbReference type="PROSITE" id="PS00767">
    <property type="entry name" value="THF_DHG_CYH_2"/>
    <property type="match status" value="1"/>
</dbReference>
<keyword id="KW-0028">Amino-acid biosynthesis</keyword>
<keyword id="KW-0368">Histidine biosynthesis</keyword>
<keyword id="KW-0378">Hydrolase</keyword>
<keyword id="KW-0486">Methionine biosynthesis</keyword>
<keyword id="KW-0511">Multifunctional enzyme</keyword>
<keyword id="KW-0521">NADP</keyword>
<keyword id="KW-0554">One-carbon metabolism</keyword>
<keyword id="KW-0560">Oxidoreductase</keyword>
<keyword id="KW-0658">Purine biosynthesis</keyword>
<keyword id="KW-1185">Reference proteome</keyword>
<proteinExistence type="inferred from homology"/>
<accession>A5VKR7</accession>
<evidence type="ECO:0000255" key="1">
    <source>
        <dbReference type="HAMAP-Rule" id="MF_01576"/>
    </source>
</evidence>
<name>FOLD_LIMRD</name>
<reference key="1">
    <citation type="journal article" date="2011" name="PLoS Genet.">
        <title>The evolution of host specialization in the vertebrate gut symbiont Lactobacillus reuteri.</title>
        <authorList>
            <person name="Frese S.A."/>
            <person name="Benson A.K."/>
            <person name="Tannock G.W."/>
            <person name="Loach D.M."/>
            <person name="Kim J."/>
            <person name="Zhang M."/>
            <person name="Oh P.L."/>
            <person name="Heng N.C."/>
            <person name="Patil P.B."/>
            <person name="Juge N."/>
            <person name="Mackenzie D.A."/>
            <person name="Pearson B.M."/>
            <person name="Lapidus A."/>
            <person name="Dalin E."/>
            <person name="Tice H."/>
            <person name="Goltsman E."/>
            <person name="Land M."/>
            <person name="Hauser L."/>
            <person name="Ivanova N."/>
            <person name="Kyrpides N.C."/>
            <person name="Walter J."/>
        </authorList>
    </citation>
    <scope>NUCLEOTIDE SEQUENCE [LARGE SCALE GENOMIC DNA]</scope>
    <source>
        <strain>DSM 20016</strain>
    </source>
</reference>
<organism>
    <name type="scientific">Limosilactobacillus reuteri (strain DSM 20016)</name>
    <name type="common">Lactobacillus reuteri</name>
    <dbReference type="NCBI Taxonomy" id="557436"/>
    <lineage>
        <taxon>Bacteria</taxon>
        <taxon>Bacillati</taxon>
        <taxon>Bacillota</taxon>
        <taxon>Bacilli</taxon>
        <taxon>Lactobacillales</taxon>
        <taxon>Lactobacillaceae</taxon>
        <taxon>Limosilactobacillus</taxon>
    </lineage>
</organism>
<gene>
    <name evidence="1" type="primary">folD</name>
    <name type="ordered locus">Lreu_1184</name>
</gene>
<feature type="chain" id="PRO_1000069246" description="Bifunctional protein FolD">
    <location>
        <begin position="1"/>
        <end position="286"/>
    </location>
</feature>
<feature type="binding site" evidence="1">
    <location>
        <begin position="167"/>
        <end position="169"/>
    </location>
    <ligand>
        <name>NADP(+)</name>
        <dbReference type="ChEBI" id="CHEBI:58349"/>
    </ligand>
</feature>
<feature type="binding site" evidence="1">
    <location>
        <position position="233"/>
    </location>
    <ligand>
        <name>NADP(+)</name>
        <dbReference type="ChEBI" id="CHEBI:58349"/>
    </ligand>
</feature>
<sequence>MTTIIDGKALAKKINSQTKELVAQLKEKQNIIPGIAVVIAGDDVASLIYTRNKHNKAIKLGINSVLKKFPADVSQAELLAEIEKLNHDDTIDAILVQQPLPPQLDPEVITNAILPTKDVDGLNPLNLGKLFANQHGNYPVACTPRGIMRMLAEYNIDLQGKNAVIVGRSILVGKPLLALLNNANATVTMAGRSTGDLSALTKTADILIVATGVPNLIKATDVKPGAVVIDVGINRLSNGKLTGDVDFEAVKTKAQAITPVPGGVGPMTIATLMEQTVDLAWWRHHG</sequence>